<dbReference type="EC" id="2.5.1.6" evidence="1"/>
<dbReference type="EMBL" id="CP000124">
    <property type="protein sequence ID" value="ABA50835.1"/>
    <property type="molecule type" value="Genomic_DNA"/>
</dbReference>
<dbReference type="RefSeq" id="WP_004199069.1">
    <property type="nucleotide sequence ID" value="NC_007434.1"/>
</dbReference>
<dbReference type="SMR" id="Q3JX94"/>
<dbReference type="EnsemblBacteria" id="ABA50835">
    <property type="protein sequence ID" value="ABA50835"/>
    <property type="gene ID" value="BURPS1710b_0395"/>
</dbReference>
<dbReference type="GeneID" id="93058721"/>
<dbReference type="KEGG" id="bpm:BURPS1710b_0395"/>
<dbReference type="HOGENOM" id="CLU_041802_1_1_4"/>
<dbReference type="UniPathway" id="UPA00315">
    <property type="reaction ID" value="UER00080"/>
</dbReference>
<dbReference type="Proteomes" id="UP000002700">
    <property type="component" value="Chromosome I"/>
</dbReference>
<dbReference type="GO" id="GO:0005737">
    <property type="term" value="C:cytoplasm"/>
    <property type="evidence" value="ECO:0007669"/>
    <property type="project" value="UniProtKB-SubCell"/>
</dbReference>
<dbReference type="GO" id="GO:0005524">
    <property type="term" value="F:ATP binding"/>
    <property type="evidence" value="ECO:0007669"/>
    <property type="project" value="UniProtKB-UniRule"/>
</dbReference>
<dbReference type="GO" id="GO:0000287">
    <property type="term" value="F:magnesium ion binding"/>
    <property type="evidence" value="ECO:0007669"/>
    <property type="project" value="UniProtKB-UniRule"/>
</dbReference>
<dbReference type="GO" id="GO:0004478">
    <property type="term" value="F:methionine adenosyltransferase activity"/>
    <property type="evidence" value="ECO:0007669"/>
    <property type="project" value="UniProtKB-UniRule"/>
</dbReference>
<dbReference type="GO" id="GO:0006730">
    <property type="term" value="P:one-carbon metabolic process"/>
    <property type="evidence" value="ECO:0007669"/>
    <property type="project" value="UniProtKB-KW"/>
</dbReference>
<dbReference type="GO" id="GO:0006556">
    <property type="term" value="P:S-adenosylmethionine biosynthetic process"/>
    <property type="evidence" value="ECO:0007669"/>
    <property type="project" value="UniProtKB-UniRule"/>
</dbReference>
<dbReference type="CDD" id="cd18079">
    <property type="entry name" value="S-AdoMet_synt"/>
    <property type="match status" value="1"/>
</dbReference>
<dbReference type="FunFam" id="3.30.300.10:FF:000003">
    <property type="entry name" value="S-adenosylmethionine synthase"/>
    <property type="match status" value="1"/>
</dbReference>
<dbReference type="FunFam" id="3.30.300.10:FF:000004">
    <property type="entry name" value="S-adenosylmethionine synthase"/>
    <property type="match status" value="1"/>
</dbReference>
<dbReference type="Gene3D" id="3.30.300.10">
    <property type="match status" value="3"/>
</dbReference>
<dbReference type="HAMAP" id="MF_00086">
    <property type="entry name" value="S_AdoMet_synth1"/>
    <property type="match status" value="1"/>
</dbReference>
<dbReference type="InterPro" id="IPR022631">
    <property type="entry name" value="ADOMET_SYNTHASE_CS"/>
</dbReference>
<dbReference type="InterPro" id="IPR022630">
    <property type="entry name" value="S-AdoMet_synt_C"/>
</dbReference>
<dbReference type="InterPro" id="IPR022629">
    <property type="entry name" value="S-AdoMet_synt_central"/>
</dbReference>
<dbReference type="InterPro" id="IPR022628">
    <property type="entry name" value="S-AdoMet_synt_N"/>
</dbReference>
<dbReference type="InterPro" id="IPR002133">
    <property type="entry name" value="S-AdoMet_synthetase"/>
</dbReference>
<dbReference type="InterPro" id="IPR022636">
    <property type="entry name" value="S-AdoMet_synthetase_sfam"/>
</dbReference>
<dbReference type="NCBIfam" id="TIGR01034">
    <property type="entry name" value="metK"/>
    <property type="match status" value="1"/>
</dbReference>
<dbReference type="PANTHER" id="PTHR11964">
    <property type="entry name" value="S-ADENOSYLMETHIONINE SYNTHETASE"/>
    <property type="match status" value="1"/>
</dbReference>
<dbReference type="Pfam" id="PF02773">
    <property type="entry name" value="S-AdoMet_synt_C"/>
    <property type="match status" value="1"/>
</dbReference>
<dbReference type="Pfam" id="PF02772">
    <property type="entry name" value="S-AdoMet_synt_M"/>
    <property type="match status" value="1"/>
</dbReference>
<dbReference type="Pfam" id="PF00438">
    <property type="entry name" value="S-AdoMet_synt_N"/>
    <property type="match status" value="1"/>
</dbReference>
<dbReference type="PIRSF" id="PIRSF000497">
    <property type="entry name" value="MAT"/>
    <property type="match status" value="1"/>
</dbReference>
<dbReference type="SUPFAM" id="SSF55973">
    <property type="entry name" value="S-adenosylmethionine synthetase"/>
    <property type="match status" value="3"/>
</dbReference>
<dbReference type="PROSITE" id="PS00376">
    <property type="entry name" value="ADOMET_SYNTHASE_1"/>
    <property type="match status" value="1"/>
</dbReference>
<dbReference type="PROSITE" id="PS00377">
    <property type="entry name" value="ADOMET_SYNTHASE_2"/>
    <property type="match status" value="1"/>
</dbReference>
<name>METK_BURP1</name>
<proteinExistence type="inferred from homology"/>
<accession>Q3JX94</accession>
<sequence length="395" mass="42641">MANDYLFTSESVSEGHPDKVADQISDAILDAILAQDKYSRVAAETLCNTGLVVLAGEITTTANIDYIQIARDTIKRIGYDNTDYGIDYRGCAVLVAYDKQSPDIAQGVDRAHDNNLDQGAGDQGLMFGYACDETPELMPLPIHLSHRLVERQANLRRDGRLPWLRPDAKSQVTVRYVDGKPHSIDTVVLSTQHAPEIDLPALREAVIEEVIKPTLPADLIKGDIKFLVNPTGRFVIGGPQGDCGLTGRKIIVDTYGGAAPHGGGAFSGKDPSKVDRSAAYAGRYVAKNIVAAGLASRALIQVSYAIGVAEPTSVMVNTFGTGRVSDETITKLVREHFDLRPKGIIQMLDLLRPIYEKTAAYGHFGREEPEFSWEAADKALALAEAAGVEPAVQVA</sequence>
<keyword id="KW-0067">ATP-binding</keyword>
<keyword id="KW-0963">Cytoplasm</keyword>
<keyword id="KW-0460">Magnesium</keyword>
<keyword id="KW-0479">Metal-binding</keyword>
<keyword id="KW-0547">Nucleotide-binding</keyword>
<keyword id="KW-0554">One-carbon metabolism</keyword>
<keyword id="KW-0630">Potassium</keyword>
<keyword id="KW-0808">Transferase</keyword>
<protein>
    <recommendedName>
        <fullName evidence="1">S-adenosylmethionine synthase</fullName>
        <shortName evidence="1">AdoMet synthase</shortName>
        <ecNumber evidence="1">2.5.1.6</ecNumber>
    </recommendedName>
    <alternativeName>
        <fullName evidence="1">MAT</fullName>
    </alternativeName>
    <alternativeName>
        <fullName evidence="1">Methionine adenosyltransferase</fullName>
    </alternativeName>
</protein>
<comment type="function">
    <text evidence="1">Catalyzes the formation of S-adenosylmethionine (AdoMet) from methionine and ATP. The overall synthetic reaction is composed of two sequential steps, AdoMet formation and the subsequent tripolyphosphate hydrolysis which occurs prior to release of AdoMet from the enzyme.</text>
</comment>
<comment type="catalytic activity">
    <reaction evidence="1">
        <text>L-methionine + ATP + H2O = S-adenosyl-L-methionine + phosphate + diphosphate</text>
        <dbReference type="Rhea" id="RHEA:21080"/>
        <dbReference type="ChEBI" id="CHEBI:15377"/>
        <dbReference type="ChEBI" id="CHEBI:30616"/>
        <dbReference type="ChEBI" id="CHEBI:33019"/>
        <dbReference type="ChEBI" id="CHEBI:43474"/>
        <dbReference type="ChEBI" id="CHEBI:57844"/>
        <dbReference type="ChEBI" id="CHEBI:59789"/>
        <dbReference type="EC" id="2.5.1.6"/>
    </reaction>
</comment>
<comment type="cofactor">
    <cofactor evidence="1">
        <name>Mg(2+)</name>
        <dbReference type="ChEBI" id="CHEBI:18420"/>
    </cofactor>
    <text evidence="1">Binds 2 divalent ions per subunit.</text>
</comment>
<comment type="cofactor">
    <cofactor evidence="1">
        <name>K(+)</name>
        <dbReference type="ChEBI" id="CHEBI:29103"/>
    </cofactor>
    <text evidence="1">Binds 1 potassium ion per subunit.</text>
</comment>
<comment type="pathway">
    <text evidence="1">Amino-acid biosynthesis; S-adenosyl-L-methionine biosynthesis; S-adenosyl-L-methionine from L-methionine: step 1/1.</text>
</comment>
<comment type="subunit">
    <text evidence="1">Homotetramer; dimer of dimers.</text>
</comment>
<comment type="subcellular location">
    <subcellularLocation>
        <location evidence="1">Cytoplasm</location>
    </subcellularLocation>
</comment>
<comment type="similarity">
    <text evidence="1">Belongs to the AdoMet synthase family.</text>
</comment>
<evidence type="ECO:0000255" key="1">
    <source>
        <dbReference type="HAMAP-Rule" id="MF_00086"/>
    </source>
</evidence>
<gene>
    <name evidence="1" type="primary">metK</name>
    <name type="ordered locus">BURPS1710b_0395</name>
</gene>
<organism>
    <name type="scientific">Burkholderia pseudomallei (strain 1710b)</name>
    <dbReference type="NCBI Taxonomy" id="320372"/>
    <lineage>
        <taxon>Bacteria</taxon>
        <taxon>Pseudomonadati</taxon>
        <taxon>Pseudomonadota</taxon>
        <taxon>Betaproteobacteria</taxon>
        <taxon>Burkholderiales</taxon>
        <taxon>Burkholderiaceae</taxon>
        <taxon>Burkholderia</taxon>
        <taxon>pseudomallei group</taxon>
    </lineage>
</organism>
<feature type="chain" id="PRO_0000240983" description="S-adenosylmethionine synthase">
    <location>
        <begin position="1"/>
        <end position="395"/>
    </location>
</feature>
<feature type="region of interest" description="Flexible loop" evidence="1">
    <location>
        <begin position="100"/>
        <end position="110"/>
    </location>
</feature>
<feature type="binding site" description="in other chain" evidence="1">
    <location>
        <position position="16"/>
    </location>
    <ligand>
        <name>ATP</name>
        <dbReference type="ChEBI" id="CHEBI:30616"/>
        <note>ligand shared between two neighboring subunits</note>
    </ligand>
</feature>
<feature type="binding site" evidence="1">
    <location>
        <position position="18"/>
    </location>
    <ligand>
        <name>Mg(2+)</name>
        <dbReference type="ChEBI" id="CHEBI:18420"/>
    </ligand>
</feature>
<feature type="binding site" evidence="1">
    <location>
        <position position="44"/>
    </location>
    <ligand>
        <name>K(+)</name>
        <dbReference type="ChEBI" id="CHEBI:29103"/>
    </ligand>
</feature>
<feature type="binding site" description="in other chain" evidence="1">
    <location>
        <position position="57"/>
    </location>
    <ligand>
        <name>L-methionine</name>
        <dbReference type="ChEBI" id="CHEBI:57844"/>
        <note>ligand shared between two neighboring subunits</note>
    </ligand>
</feature>
<feature type="binding site" description="in other chain" evidence="1">
    <location>
        <position position="100"/>
    </location>
    <ligand>
        <name>L-methionine</name>
        <dbReference type="ChEBI" id="CHEBI:57844"/>
        <note>ligand shared between two neighboring subunits</note>
    </ligand>
</feature>
<feature type="binding site" description="in other chain" evidence="1">
    <location>
        <begin position="167"/>
        <end position="169"/>
    </location>
    <ligand>
        <name>ATP</name>
        <dbReference type="ChEBI" id="CHEBI:30616"/>
        <note>ligand shared between two neighboring subunits</note>
    </ligand>
</feature>
<feature type="binding site" description="in other chain" evidence="1">
    <location>
        <begin position="233"/>
        <end position="234"/>
    </location>
    <ligand>
        <name>ATP</name>
        <dbReference type="ChEBI" id="CHEBI:30616"/>
        <note>ligand shared between two neighboring subunits</note>
    </ligand>
</feature>
<feature type="binding site" evidence="1">
    <location>
        <position position="242"/>
    </location>
    <ligand>
        <name>ATP</name>
        <dbReference type="ChEBI" id="CHEBI:30616"/>
        <note>ligand shared between two neighboring subunits</note>
    </ligand>
</feature>
<feature type="binding site" evidence="1">
    <location>
        <position position="242"/>
    </location>
    <ligand>
        <name>L-methionine</name>
        <dbReference type="ChEBI" id="CHEBI:57844"/>
        <note>ligand shared between two neighboring subunits</note>
    </ligand>
</feature>
<feature type="binding site" description="in other chain" evidence="1">
    <location>
        <begin position="248"/>
        <end position="249"/>
    </location>
    <ligand>
        <name>ATP</name>
        <dbReference type="ChEBI" id="CHEBI:30616"/>
        <note>ligand shared between two neighboring subunits</note>
    </ligand>
</feature>
<feature type="binding site" evidence="1">
    <location>
        <position position="265"/>
    </location>
    <ligand>
        <name>ATP</name>
        <dbReference type="ChEBI" id="CHEBI:30616"/>
        <note>ligand shared between two neighboring subunits</note>
    </ligand>
</feature>
<feature type="binding site" evidence="1">
    <location>
        <position position="269"/>
    </location>
    <ligand>
        <name>ATP</name>
        <dbReference type="ChEBI" id="CHEBI:30616"/>
        <note>ligand shared between two neighboring subunits</note>
    </ligand>
</feature>
<feature type="binding site" description="in other chain" evidence="1">
    <location>
        <position position="273"/>
    </location>
    <ligand>
        <name>L-methionine</name>
        <dbReference type="ChEBI" id="CHEBI:57844"/>
        <note>ligand shared between two neighboring subunits</note>
    </ligand>
</feature>
<reference key="1">
    <citation type="journal article" date="2010" name="Genome Biol. Evol.">
        <title>Continuing evolution of Burkholderia mallei through genome reduction and large-scale rearrangements.</title>
        <authorList>
            <person name="Losada L."/>
            <person name="Ronning C.M."/>
            <person name="DeShazer D."/>
            <person name="Woods D."/>
            <person name="Fedorova N."/>
            <person name="Kim H.S."/>
            <person name="Shabalina S.A."/>
            <person name="Pearson T.R."/>
            <person name="Brinkac L."/>
            <person name="Tan P."/>
            <person name="Nandi T."/>
            <person name="Crabtree J."/>
            <person name="Badger J."/>
            <person name="Beckstrom-Sternberg S."/>
            <person name="Saqib M."/>
            <person name="Schutzer S.E."/>
            <person name="Keim P."/>
            <person name="Nierman W.C."/>
        </authorList>
    </citation>
    <scope>NUCLEOTIDE SEQUENCE [LARGE SCALE GENOMIC DNA]</scope>
    <source>
        <strain>1710b</strain>
    </source>
</reference>